<protein>
    <recommendedName>
        <fullName>Cdc25-like protein phosphatase twine</fullName>
        <ecNumber>3.1.3.48</ecNumber>
    </recommendedName>
</protein>
<comment type="function">
    <text>Required during meiosis. Regulates the transition from the extended G2 phase to the onset of the first meiotic division.</text>
</comment>
<comment type="catalytic activity">
    <reaction>
        <text>O-phospho-L-tyrosyl-[protein] + H2O = L-tyrosyl-[protein] + phosphate</text>
        <dbReference type="Rhea" id="RHEA:10684"/>
        <dbReference type="Rhea" id="RHEA-COMP:10136"/>
        <dbReference type="Rhea" id="RHEA-COMP:20101"/>
        <dbReference type="ChEBI" id="CHEBI:15377"/>
        <dbReference type="ChEBI" id="CHEBI:43474"/>
        <dbReference type="ChEBI" id="CHEBI:46858"/>
        <dbReference type="ChEBI" id="CHEBI:61978"/>
        <dbReference type="EC" id="3.1.3.48"/>
    </reaction>
</comment>
<comment type="interaction">
    <interactant intactId="EBI-138996">
        <id>Q03019</id>
    </interactant>
    <interactant intactId="EBI-108689">
        <id>P23572</id>
        <label>Cdk1</label>
    </interactant>
    <organismsDiffer>false</organismsDiffer>
    <experiments>4</experiments>
</comment>
<comment type="tissue specificity">
    <text>Expressed in developing male and female germ cells.</text>
</comment>
<comment type="similarity">
    <text evidence="4">Belongs to the MPI phosphatase family.</text>
</comment>
<name>TWINE_DROME</name>
<organism>
    <name type="scientific">Drosophila melanogaster</name>
    <name type="common">Fruit fly</name>
    <dbReference type="NCBI Taxonomy" id="7227"/>
    <lineage>
        <taxon>Eukaryota</taxon>
        <taxon>Metazoa</taxon>
        <taxon>Ecdysozoa</taxon>
        <taxon>Arthropoda</taxon>
        <taxon>Hexapoda</taxon>
        <taxon>Insecta</taxon>
        <taxon>Pterygota</taxon>
        <taxon>Neoptera</taxon>
        <taxon>Endopterygota</taxon>
        <taxon>Diptera</taxon>
        <taxon>Brachycera</taxon>
        <taxon>Muscomorpha</taxon>
        <taxon>Ephydroidea</taxon>
        <taxon>Drosophilidae</taxon>
        <taxon>Drosophila</taxon>
        <taxon>Sophophora</taxon>
    </lineage>
</organism>
<accession>Q03019</accession>
<accession>Q9V454</accession>
<dbReference type="EC" id="3.1.3.48"/>
<dbReference type="EMBL" id="M94158">
    <property type="protein sequence ID" value="AAA28413.1"/>
    <property type="molecule type" value="mRNA"/>
</dbReference>
<dbReference type="EMBL" id="AE014134">
    <property type="protein sequence ID" value="AAF53508.1"/>
    <property type="molecule type" value="Genomic_DNA"/>
</dbReference>
<dbReference type="EMBL" id="AY061266">
    <property type="protein sequence ID" value="AAL28814.1"/>
    <property type="molecule type" value="mRNA"/>
</dbReference>
<dbReference type="EMBL" id="X69018">
    <property type="protein sequence ID" value="CAA48783.1"/>
    <property type="molecule type" value="mRNA"/>
</dbReference>
<dbReference type="PIR" id="A41910">
    <property type="entry name" value="A41910"/>
</dbReference>
<dbReference type="RefSeq" id="NP_001260491.1">
    <property type="nucleotide sequence ID" value="NM_001273562.2"/>
</dbReference>
<dbReference type="RefSeq" id="NP_001260492.1">
    <property type="nucleotide sequence ID" value="NM_001273563.1"/>
</dbReference>
<dbReference type="RefSeq" id="NP_001260493.1">
    <property type="nucleotide sequence ID" value="NM_001273564.2"/>
</dbReference>
<dbReference type="RefSeq" id="NP_476633.1">
    <property type="nucleotide sequence ID" value="NM_057285.4"/>
</dbReference>
<dbReference type="SMR" id="Q03019"/>
<dbReference type="BioGRID" id="60966">
    <property type="interactions" value="9"/>
</dbReference>
<dbReference type="DIP" id="DIP-23538N"/>
<dbReference type="FunCoup" id="Q03019">
    <property type="interactions" value="158"/>
</dbReference>
<dbReference type="IntAct" id="Q03019">
    <property type="interactions" value="6"/>
</dbReference>
<dbReference type="STRING" id="7227.FBpp0080412"/>
<dbReference type="PaxDb" id="7227-FBpp0080412"/>
<dbReference type="DNASU" id="34954"/>
<dbReference type="EnsemblMetazoa" id="FBtr0080855">
    <property type="protein sequence ID" value="FBpp0080412"/>
    <property type="gene ID" value="FBgn0002673"/>
</dbReference>
<dbReference type="EnsemblMetazoa" id="FBtr0331444">
    <property type="protein sequence ID" value="FBpp0303861"/>
    <property type="gene ID" value="FBgn0002673"/>
</dbReference>
<dbReference type="EnsemblMetazoa" id="FBtr0331445">
    <property type="protein sequence ID" value="FBpp0303862"/>
    <property type="gene ID" value="FBgn0002673"/>
</dbReference>
<dbReference type="EnsemblMetazoa" id="FBtr0331446">
    <property type="protein sequence ID" value="FBpp0303863"/>
    <property type="gene ID" value="FBgn0002673"/>
</dbReference>
<dbReference type="GeneID" id="34954"/>
<dbReference type="KEGG" id="dme:Dmel_CG4965"/>
<dbReference type="UCSC" id="CG4965-RA">
    <property type="organism name" value="d. melanogaster"/>
</dbReference>
<dbReference type="AGR" id="FB:FBgn0002673"/>
<dbReference type="CTD" id="34954"/>
<dbReference type="FlyBase" id="FBgn0002673">
    <property type="gene designation" value="twe"/>
</dbReference>
<dbReference type="VEuPathDB" id="VectorBase:FBgn0002673"/>
<dbReference type="eggNOG" id="KOG3772">
    <property type="taxonomic scope" value="Eukaryota"/>
</dbReference>
<dbReference type="GeneTree" id="ENSGT00940000166659"/>
<dbReference type="HOGENOM" id="CLU_014464_3_1_1"/>
<dbReference type="InParanoid" id="Q03019"/>
<dbReference type="OMA" id="KPCALPC"/>
<dbReference type="OrthoDB" id="26523at2759"/>
<dbReference type="PhylomeDB" id="Q03019"/>
<dbReference type="Reactome" id="R-DME-156711">
    <property type="pathway name" value="Polo-like kinase mediated events"/>
</dbReference>
<dbReference type="Reactome" id="R-DME-176187">
    <property type="pathway name" value="Activation of ATR in response to replication stress"/>
</dbReference>
<dbReference type="Reactome" id="R-DME-5625740">
    <property type="pathway name" value="RHO GTPases activate PKNs"/>
</dbReference>
<dbReference type="Reactome" id="R-DME-5689880">
    <property type="pathway name" value="Ub-specific processing proteases"/>
</dbReference>
<dbReference type="Reactome" id="R-DME-69202">
    <property type="pathway name" value="Cyclin E associated events during G1/S transition"/>
</dbReference>
<dbReference type="Reactome" id="R-DME-69273">
    <property type="pathway name" value="Cyclin A/B1/B2 associated events during G2/M transition"/>
</dbReference>
<dbReference type="Reactome" id="R-DME-69601">
    <property type="pathway name" value="Ubiquitin Mediated Degradation of Phosphorylated Cdc25A"/>
</dbReference>
<dbReference type="Reactome" id="R-DME-69656">
    <property type="pathway name" value="Cyclin A:Cdk2-associated events at S phase entry"/>
</dbReference>
<dbReference type="Reactome" id="R-DME-75035">
    <property type="pathway name" value="Chk1/Chk2(Cds1) mediated inactivation of Cyclin B:Cdk1 complex"/>
</dbReference>
<dbReference type="SignaLink" id="Q03019"/>
<dbReference type="BioGRID-ORCS" id="34954">
    <property type="hits" value="0 hits in 3 CRISPR screens"/>
</dbReference>
<dbReference type="ChiTaRS" id="twe">
    <property type="organism name" value="fly"/>
</dbReference>
<dbReference type="GenomeRNAi" id="34954"/>
<dbReference type="PRO" id="PR:Q03019"/>
<dbReference type="Proteomes" id="UP000000803">
    <property type="component" value="Chromosome 2L"/>
</dbReference>
<dbReference type="Bgee" id="FBgn0002673">
    <property type="expression patterns" value="Expressed in cleaving embryo and 58 other cell types or tissues"/>
</dbReference>
<dbReference type="ExpressionAtlas" id="Q03019">
    <property type="expression patterns" value="baseline and differential"/>
</dbReference>
<dbReference type="GO" id="GO:0005737">
    <property type="term" value="C:cytoplasm"/>
    <property type="evidence" value="ECO:0000318"/>
    <property type="project" value="GO_Central"/>
</dbReference>
<dbReference type="GO" id="GO:0005634">
    <property type="term" value="C:nucleus"/>
    <property type="evidence" value="ECO:0000314"/>
    <property type="project" value="FlyBase"/>
</dbReference>
<dbReference type="GO" id="GO:0005819">
    <property type="term" value="C:spindle"/>
    <property type="evidence" value="ECO:0000314"/>
    <property type="project" value="FlyBase"/>
</dbReference>
<dbReference type="GO" id="GO:0004725">
    <property type="term" value="F:protein tyrosine phosphatase activity"/>
    <property type="evidence" value="ECO:0000250"/>
    <property type="project" value="FlyBase"/>
</dbReference>
<dbReference type="GO" id="GO:0051301">
    <property type="term" value="P:cell division"/>
    <property type="evidence" value="ECO:0007669"/>
    <property type="project" value="UniProtKB-KW"/>
</dbReference>
<dbReference type="GO" id="GO:0009880">
    <property type="term" value="P:embryonic pattern specification"/>
    <property type="evidence" value="ECO:0007001"/>
    <property type="project" value="FlyBase"/>
</dbReference>
<dbReference type="GO" id="GO:0000086">
    <property type="term" value="P:G2/M transition of mitotic cell cycle"/>
    <property type="evidence" value="ECO:0000318"/>
    <property type="project" value="GO_Central"/>
</dbReference>
<dbReference type="GO" id="GO:0007140">
    <property type="term" value="P:male meiotic nuclear division"/>
    <property type="evidence" value="ECO:0000315"/>
    <property type="project" value="FlyBase"/>
</dbReference>
<dbReference type="GO" id="GO:0051078">
    <property type="term" value="P:meiotic nuclear membrane disassembly"/>
    <property type="evidence" value="ECO:0000315"/>
    <property type="project" value="FlyBase"/>
</dbReference>
<dbReference type="GO" id="GO:0010971">
    <property type="term" value="P:positive regulation of G2/M transition of mitotic cell cycle"/>
    <property type="evidence" value="ECO:0000318"/>
    <property type="project" value="GO_Central"/>
</dbReference>
<dbReference type="GO" id="GO:0110032">
    <property type="term" value="P:positive regulation of G2/MI transition of meiotic cell cycle"/>
    <property type="evidence" value="ECO:0000318"/>
    <property type="project" value="GO_Central"/>
</dbReference>
<dbReference type="GO" id="GO:0051445">
    <property type="term" value="P:regulation of meiotic cell cycle"/>
    <property type="evidence" value="ECO:0000315"/>
    <property type="project" value="FlyBase"/>
</dbReference>
<dbReference type="GO" id="GO:0007348">
    <property type="term" value="P:regulation of syncytial blastoderm mitotic cell cycle"/>
    <property type="evidence" value="ECO:0000315"/>
    <property type="project" value="FlyBase"/>
</dbReference>
<dbReference type="GO" id="GO:0007283">
    <property type="term" value="P:spermatogenesis"/>
    <property type="evidence" value="ECO:0000315"/>
    <property type="project" value="FlyBase"/>
</dbReference>
<dbReference type="CDD" id="cd01530">
    <property type="entry name" value="Cdc25"/>
    <property type="match status" value="1"/>
</dbReference>
<dbReference type="FunFam" id="3.40.250.10:FF:000036">
    <property type="entry name" value="M-phase inducer phosphatase"/>
    <property type="match status" value="1"/>
</dbReference>
<dbReference type="Gene3D" id="3.40.250.10">
    <property type="entry name" value="Rhodanese-like domain"/>
    <property type="match status" value="1"/>
</dbReference>
<dbReference type="InterPro" id="IPR000751">
    <property type="entry name" value="MPI_Phosphatase"/>
</dbReference>
<dbReference type="InterPro" id="IPR001763">
    <property type="entry name" value="Rhodanese-like_dom"/>
</dbReference>
<dbReference type="InterPro" id="IPR036873">
    <property type="entry name" value="Rhodanese-like_dom_sf"/>
</dbReference>
<dbReference type="PANTHER" id="PTHR10828:SF76">
    <property type="entry name" value="M-PHASE INDUCER PHOSPHATASE"/>
    <property type="match status" value="1"/>
</dbReference>
<dbReference type="PANTHER" id="PTHR10828">
    <property type="entry name" value="M-PHASE INDUCER PHOSPHATASE DUAL SPECIFICITY PHOSPHATASE CDC25"/>
    <property type="match status" value="1"/>
</dbReference>
<dbReference type="Pfam" id="PF00581">
    <property type="entry name" value="Rhodanese"/>
    <property type="match status" value="1"/>
</dbReference>
<dbReference type="PRINTS" id="PR00716">
    <property type="entry name" value="MPIPHPHTASE"/>
</dbReference>
<dbReference type="SMART" id="SM00450">
    <property type="entry name" value="RHOD"/>
    <property type="match status" value="1"/>
</dbReference>
<dbReference type="SUPFAM" id="SSF52821">
    <property type="entry name" value="Rhodanese/Cell cycle control phosphatase"/>
    <property type="match status" value="1"/>
</dbReference>
<dbReference type="PROSITE" id="PS50206">
    <property type="entry name" value="RHODANESE_3"/>
    <property type="match status" value="1"/>
</dbReference>
<gene>
    <name type="primary">twe</name>
    <name type="ORF">CG4965</name>
</gene>
<reference key="1">
    <citation type="journal article" date="1992" name="Cell">
        <title>Twine, a cdc25 homolog that functions in the male and female germline of Drosophila.</title>
        <authorList>
            <person name="Alphey L.S."/>
            <person name="Jimenez J."/>
            <person name="White-Cooper H."/>
            <person name="Dawson I."/>
            <person name="Nurse P."/>
            <person name="Glover D.M."/>
        </authorList>
    </citation>
    <scope>NUCLEOTIDE SEQUENCE [MRNA]</scope>
</reference>
<reference key="2">
    <citation type="journal article" date="1999" name="Genetics">
        <title>An exploration of the sequence of a 2.9-Mb region of the genome of Drosophila melanogaster: the Adh region.</title>
        <authorList>
            <person name="Ashburner M."/>
            <person name="Misra S."/>
            <person name="Roote J."/>
            <person name="Lewis S.E."/>
            <person name="Blazej R.G."/>
            <person name="Davis T."/>
            <person name="Doyle C."/>
            <person name="Galle R.F."/>
            <person name="George R.A."/>
            <person name="Harris N.L."/>
            <person name="Hartzell G."/>
            <person name="Harvey D.A."/>
            <person name="Hong L."/>
            <person name="Houston K.A."/>
            <person name="Hoskins R.A."/>
            <person name="Johnson G."/>
            <person name="Martin C."/>
            <person name="Moshrefi A.R."/>
            <person name="Palazzolo M."/>
            <person name="Reese M.G."/>
            <person name="Spradling A.C."/>
            <person name="Tsang G."/>
            <person name="Wan K.H."/>
            <person name="Whitelaw K."/>
            <person name="Celniker S.E."/>
            <person name="Rubin G.M."/>
        </authorList>
    </citation>
    <scope>NUCLEOTIDE SEQUENCE [LARGE SCALE GENOMIC DNA]</scope>
    <source>
        <strain>Berkeley</strain>
    </source>
</reference>
<reference key="3">
    <citation type="journal article" date="2000" name="Science">
        <title>The genome sequence of Drosophila melanogaster.</title>
        <authorList>
            <person name="Adams M.D."/>
            <person name="Celniker S.E."/>
            <person name="Holt R.A."/>
            <person name="Evans C.A."/>
            <person name="Gocayne J.D."/>
            <person name="Amanatides P.G."/>
            <person name="Scherer S.E."/>
            <person name="Li P.W."/>
            <person name="Hoskins R.A."/>
            <person name="Galle R.F."/>
            <person name="George R.A."/>
            <person name="Lewis S.E."/>
            <person name="Richards S."/>
            <person name="Ashburner M."/>
            <person name="Henderson S.N."/>
            <person name="Sutton G.G."/>
            <person name="Wortman J.R."/>
            <person name="Yandell M.D."/>
            <person name="Zhang Q."/>
            <person name="Chen L.X."/>
            <person name="Brandon R.C."/>
            <person name="Rogers Y.-H.C."/>
            <person name="Blazej R.G."/>
            <person name="Champe M."/>
            <person name="Pfeiffer B.D."/>
            <person name="Wan K.H."/>
            <person name="Doyle C."/>
            <person name="Baxter E.G."/>
            <person name="Helt G."/>
            <person name="Nelson C.R."/>
            <person name="Miklos G.L.G."/>
            <person name="Abril J.F."/>
            <person name="Agbayani A."/>
            <person name="An H.-J."/>
            <person name="Andrews-Pfannkoch C."/>
            <person name="Baldwin D."/>
            <person name="Ballew R.M."/>
            <person name="Basu A."/>
            <person name="Baxendale J."/>
            <person name="Bayraktaroglu L."/>
            <person name="Beasley E.M."/>
            <person name="Beeson K.Y."/>
            <person name="Benos P.V."/>
            <person name="Berman B.P."/>
            <person name="Bhandari D."/>
            <person name="Bolshakov S."/>
            <person name="Borkova D."/>
            <person name="Botchan M.R."/>
            <person name="Bouck J."/>
            <person name="Brokstein P."/>
            <person name="Brottier P."/>
            <person name="Burtis K.C."/>
            <person name="Busam D.A."/>
            <person name="Butler H."/>
            <person name="Cadieu E."/>
            <person name="Center A."/>
            <person name="Chandra I."/>
            <person name="Cherry J.M."/>
            <person name="Cawley S."/>
            <person name="Dahlke C."/>
            <person name="Davenport L.B."/>
            <person name="Davies P."/>
            <person name="de Pablos B."/>
            <person name="Delcher A."/>
            <person name="Deng Z."/>
            <person name="Mays A.D."/>
            <person name="Dew I."/>
            <person name="Dietz S.M."/>
            <person name="Dodson K."/>
            <person name="Doup L.E."/>
            <person name="Downes M."/>
            <person name="Dugan-Rocha S."/>
            <person name="Dunkov B.C."/>
            <person name="Dunn P."/>
            <person name="Durbin K.J."/>
            <person name="Evangelista C.C."/>
            <person name="Ferraz C."/>
            <person name="Ferriera S."/>
            <person name="Fleischmann W."/>
            <person name="Fosler C."/>
            <person name="Gabrielian A.E."/>
            <person name="Garg N.S."/>
            <person name="Gelbart W.M."/>
            <person name="Glasser K."/>
            <person name="Glodek A."/>
            <person name="Gong F."/>
            <person name="Gorrell J.H."/>
            <person name="Gu Z."/>
            <person name="Guan P."/>
            <person name="Harris M."/>
            <person name="Harris N.L."/>
            <person name="Harvey D.A."/>
            <person name="Heiman T.J."/>
            <person name="Hernandez J.R."/>
            <person name="Houck J."/>
            <person name="Hostin D."/>
            <person name="Houston K.A."/>
            <person name="Howland T.J."/>
            <person name="Wei M.-H."/>
            <person name="Ibegwam C."/>
            <person name="Jalali M."/>
            <person name="Kalush F."/>
            <person name="Karpen G.H."/>
            <person name="Ke Z."/>
            <person name="Kennison J.A."/>
            <person name="Ketchum K.A."/>
            <person name="Kimmel B.E."/>
            <person name="Kodira C.D."/>
            <person name="Kraft C.L."/>
            <person name="Kravitz S."/>
            <person name="Kulp D."/>
            <person name="Lai Z."/>
            <person name="Lasko P."/>
            <person name="Lei Y."/>
            <person name="Levitsky A.A."/>
            <person name="Li J.H."/>
            <person name="Li Z."/>
            <person name="Liang Y."/>
            <person name="Lin X."/>
            <person name="Liu X."/>
            <person name="Mattei B."/>
            <person name="McIntosh T.C."/>
            <person name="McLeod M.P."/>
            <person name="McPherson D."/>
            <person name="Merkulov G."/>
            <person name="Milshina N.V."/>
            <person name="Mobarry C."/>
            <person name="Morris J."/>
            <person name="Moshrefi A."/>
            <person name="Mount S.M."/>
            <person name="Moy M."/>
            <person name="Murphy B."/>
            <person name="Murphy L."/>
            <person name="Muzny D.M."/>
            <person name="Nelson D.L."/>
            <person name="Nelson D.R."/>
            <person name="Nelson K.A."/>
            <person name="Nixon K."/>
            <person name="Nusskern D.R."/>
            <person name="Pacleb J.M."/>
            <person name="Palazzolo M."/>
            <person name="Pittman G.S."/>
            <person name="Pan S."/>
            <person name="Pollard J."/>
            <person name="Puri V."/>
            <person name="Reese M.G."/>
            <person name="Reinert K."/>
            <person name="Remington K."/>
            <person name="Saunders R.D.C."/>
            <person name="Scheeler F."/>
            <person name="Shen H."/>
            <person name="Shue B.C."/>
            <person name="Siden-Kiamos I."/>
            <person name="Simpson M."/>
            <person name="Skupski M.P."/>
            <person name="Smith T.J."/>
            <person name="Spier E."/>
            <person name="Spradling A.C."/>
            <person name="Stapleton M."/>
            <person name="Strong R."/>
            <person name="Sun E."/>
            <person name="Svirskas R."/>
            <person name="Tector C."/>
            <person name="Turner R."/>
            <person name="Venter E."/>
            <person name="Wang A.H."/>
            <person name="Wang X."/>
            <person name="Wang Z.-Y."/>
            <person name="Wassarman D.A."/>
            <person name="Weinstock G.M."/>
            <person name="Weissenbach J."/>
            <person name="Williams S.M."/>
            <person name="Woodage T."/>
            <person name="Worley K.C."/>
            <person name="Wu D."/>
            <person name="Yang S."/>
            <person name="Yao Q.A."/>
            <person name="Ye J."/>
            <person name="Yeh R.-F."/>
            <person name="Zaveri J.S."/>
            <person name="Zhan M."/>
            <person name="Zhang G."/>
            <person name="Zhao Q."/>
            <person name="Zheng L."/>
            <person name="Zheng X.H."/>
            <person name="Zhong F.N."/>
            <person name="Zhong W."/>
            <person name="Zhou X."/>
            <person name="Zhu S.C."/>
            <person name="Zhu X."/>
            <person name="Smith H.O."/>
            <person name="Gibbs R.A."/>
            <person name="Myers E.W."/>
            <person name="Rubin G.M."/>
            <person name="Venter J.C."/>
        </authorList>
    </citation>
    <scope>NUCLEOTIDE SEQUENCE [LARGE SCALE GENOMIC DNA]</scope>
    <source>
        <strain>Berkeley</strain>
    </source>
</reference>
<reference key="4">
    <citation type="journal article" date="2002" name="Genome Biol.">
        <title>Annotation of the Drosophila melanogaster euchromatic genome: a systematic review.</title>
        <authorList>
            <person name="Misra S."/>
            <person name="Crosby M.A."/>
            <person name="Mungall C.J."/>
            <person name="Matthews B.B."/>
            <person name="Campbell K.S."/>
            <person name="Hradecky P."/>
            <person name="Huang Y."/>
            <person name="Kaminker J.S."/>
            <person name="Millburn G.H."/>
            <person name="Prochnik S.E."/>
            <person name="Smith C.D."/>
            <person name="Tupy J.L."/>
            <person name="Whitfield E.J."/>
            <person name="Bayraktaroglu L."/>
            <person name="Berman B.P."/>
            <person name="Bettencourt B.R."/>
            <person name="Celniker S.E."/>
            <person name="de Grey A.D.N.J."/>
            <person name="Drysdale R.A."/>
            <person name="Harris N.L."/>
            <person name="Richter J."/>
            <person name="Russo S."/>
            <person name="Schroeder A.J."/>
            <person name="Shu S.Q."/>
            <person name="Stapleton M."/>
            <person name="Yamada C."/>
            <person name="Ashburner M."/>
            <person name="Gelbart W.M."/>
            <person name="Rubin G.M."/>
            <person name="Lewis S.E."/>
        </authorList>
    </citation>
    <scope>GENOME REANNOTATION</scope>
    <source>
        <strain>Berkeley</strain>
    </source>
</reference>
<reference key="5">
    <citation type="journal article" date="2002" name="Genome Biol.">
        <title>A Drosophila full-length cDNA resource.</title>
        <authorList>
            <person name="Stapleton M."/>
            <person name="Carlson J.W."/>
            <person name="Brokstein P."/>
            <person name="Yu C."/>
            <person name="Champe M."/>
            <person name="George R.A."/>
            <person name="Guarin H."/>
            <person name="Kronmiller B."/>
            <person name="Pacleb J.M."/>
            <person name="Park S."/>
            <person name="Wan K.H."/>
            <person name="Rubin G.M."/>
            <person name="Celniker S.E."/>
        </authorList>
    </citation>
    <scope>NUCLEOTIDE SEQUENCE [LARGE SCALE MRNA]</scope>
    <source>
        <strain>Berkeley</strain>
        <tissue>Embryo</tissue>
    </source>
</reference>
<reference key="6">
    <citation type="journal article" date="1992" name="Development">
        <title>The Drosophila cdc25 homolog twine is required for meiosis.</title>
        <authorList>
            <person name="Courtot C."/>
            <person name="Fankhauser C."/>
            <person name="Simanis V."/>
            <person name="Lehner C.F."/>
        </authorList>
    </citation>
    <scope>NUCLEOTIDE SEQUENCE [MRNA] OF 32-426</scope>
</reference>
<keyword id="KW-0131">Cell cycle</keyword>
<keyword id="KW-0132">Cell division</keyword>
<keyword id="KW-0378">Hydrolase</keyword>
<keyword id="KW-0469">Meiosis</keyword>
<keyword id="KW-0904">Protein phosphatase</keyword>
<keyword id="KW-1185">Reference proteome</keyword>
<evidence type="ECO:0000250" key="1"/>
<evidence type="ECO:0000255" key="2">
    <source>
        <dbReference type="PROSITE-ProRule" id="PRU00173"/>
    </source>
</evidence>
<evidence type="ECO:0000256" key="3">
    <source>
        <dbReference type="SAM" id="MobiDB-lite"/>
    </source>
</evidence>
<evidence type="ECO:0000305" key="4"/>
<feature type="chain" id="PRO_0000198659" description="Cdc25-like protein phosphatase twine">
    <location>
        <begin position="1"/>
        <end position="426"/>
    </location>
</feature>
<feature type="domain" description="Rhodanese" evidence="2">
    <location>
        <begin position="265"/>
        <end position="371"/>
    </location>
</feature>
<feature type="region of interest" description="Disordered" evidence="3">
    <location>
        <begin position="1"/>
        <end position="27"/>
    </location>
</feature>
<feature type="active site" evidence="1">
    <location>
        <position position="318"/>
    </location>
</feature>
<feature type="sequence conflict" description="In Ref. 6; CAA48783." evidence="4" ref="6">
    <original>L</original>
    <variation>M</variation>
    <location>
        <position position="48"/>
    </location>
</feature>
<sequence>MASKRLMLDVEEEDDESGACGQENFDPHDADMEYQAKRRKSAVQETPLQWMLKRHIPASTTVLSPITELSQNMNGARLDGTPKSTQRIPANRTLNNFNSLSSRTLGSFSSSCSSYESGNSLDDEYMDMFEMESAENHNLELPDDLEVLLSGQLKSESNLEEMSNKKGSLRRCLSMYPSEQPEEAVQEPDQETNMPMKKMQRKTLSMNDAEIMRALGDEPELIGDLSKPCTLPCLATGIRHRDLKTISSDTLARLIQGEFDEQLGSQGGYEIIDCRYPYEFLGGHIRGAKNLYTRGQIQEAFPTLTSNQENRRIYVFHCEFSSERGPKLLRYLRSNDRSQHTHNYPALDYPELYILHNGYKEFFGLYSQLCQPSQYVPMLAPAHNDEFRYFRAKTKSWQCGEGGDSGIGGGGSRGLRKSRSRLLYAE</sequence>
<proteinExistence type="evidence at protein level"/>